<evidence type="ECO:0000255" key="1">
    <source>
        <dbReference type="HAMAP-Rule" id="MF_01325"/>
    </source>
</evidence>
<evidence type="ECO:0000256" key="2">
    <source>
        <dbReference type="SAM" id="MobiDB-lite"/>
    </source>
</evidence>
<evidence type="ECO:0000305" key="3"/>
<accession>A9B412</accession>
<feature type="chain" id="PRO_1000141876" description="Large ribosomal subunit protein uL3">
    <location>
        <begin position="1"/>
        <end position="212"/>
    </location>
</feature>
<feature type="region of interest" description="Disordered" evidence="2">
    <location>
        <begin position="127"/>
        <end position="153"/>
    </location>
</feature>
<name>RL3_HERA2</name>
<proteinExistence type="inferred from homology"/>
<sequence>MLNGILGRKIGMTQIFTEKGETIPVTVIEAGPCVVTQLRTKDKDGYEAVQLGFGEIKPRKVTKPIQGHLKAAGRLVRFMREVKTTDLNAHNVGDVVNVDIFQIGEKIDVVGTSKGRGFAGVVKRHGFRGGPATHGQSDRHRAPGSIGSGTTPGRVWKNMRMAGRMGNDRVTVQNLEVVKIDLERHVILVKGSVPGAKNGLVMVSRAAKATKK</sequence>
<comment type="function">
    <text evidence="1">One of the primary rRNA binding proteins, it binds directly near the 3'-end of the 23S rRNA, where it nucleates assembly of the 50S subunit.</text>
</comment>
<comment type="subunit">
    <text evidence="1">Part of the 50S ribosomal subunit. Forms a cluster with proteins L14 and L19.</text>
</comment>
<comment type="similarity">
    <text evidence="1">Belongs to the universal ribosomal protein uL3 family.</text>
</comment>
<dbReference type="EMBL" id="CP000875">
    <property type="protein sequence ID" value="ABX07545.1"/>
    <property type="molecule type" value="Genomic_DNA"/>
</dbReference>
<dbReference type="SMR" id="A9B412"/>
<dbReference type="FunCoup" id="A9B412">
    <property type="interactions" value="564"/>
</dbReference>
<dbReference type="STRING" id="316274.Haur_4915"/>
<dbReference type="KEGG" id="hau:Haur_4915"/>
<dbReference type="eggNOG" id="COG0087">
    <property type="taxonomic scope" value="Bacteria"/>
</dbReference>
<dbReference type="HOGENOM" id="CLU_044142_4_1_0"/>
<dbReference type="InParanoid" id="A9B412"/>
<dbReference type="Proteomes" id="UP000000787">
    <property type="component" value="Chromosome"/>
</dbReference>
<dbReference type="GO" id="GO:0022625">
    <property type="term" value="C:cytosolic large ribosomal subunit"/>
    <property type="evidence" value="ECO:0007669"/>
    <property type="project" value="TreeGrafter"/>
</dbReference>
<dbReference type="GO" id="GO:0019843">
    <property type="term" value="F:rRNA binding"/>
    <property type="evidence" value="ECO:0007669"/>
    <property type="project" value="UniProtKB-UniRule"/>
</dbReference>
<dbReference type="GO" id="GO:0003735">
    <property type="term" value="F:structural constituent of ribosome"/>
    <property type="evidence" value="ECO:0007669"/>
    <property type="project" value="InterPro"/>
</dbReference>
<dbReference type="GO" id="GO:0006412">
    <property type="term" value="P:translation"/>
    <property type="evidence" value="ECO:0007669"/>
    <property type="project" value="UniProtKB-UniRule"/>
</dbReference>
<dbReference type="FunFam" id="2.40.30.10:FF:000004">
    <property type="entry name" value="50S ribosomal protein L3"/>
    <property type="match status" value="1"/>
</dbReference>
<dbReference type="FunFam" id="3.30.160.810:FF:000001">
    <property type="entry name" value="50S ribosomal protein L3"/>
    <property type="match status" value="1"/>
</dbReference>
<dbReference type="Gene3D" id="3.30.160.810">
    <property type="match status" value="1"/>
</dbReference>
<dbReference type="Gene3D" id="2.40.30.10">
    <property type="entry name" value="Translation factors"/>
    <property type="match status" value="1"/>
</dbReference>
<dbReference type="HAMAP" id="MF_01325_B">
    <property type="entry name" value="Ribosomal_uL3_B"/>
    <property type="match status" value="1"/>
</dbReference>
<dbReference type="InterPro" id="IPR000597">
    <property type="entry name" value="Ribosomal_uL3"/>
</dbReference>
<dbReference type="InterPro" id="IPR019927">
    <property type="entry name" value="Ribosomal_uL3_bac/org-type"/>
</dbReference>
<dbReference type="InterPro" id="IPR019926">
    <property type="entry name" value="Ribosomal_uL3_CS"/>
</dbReference>
<dbReference type="InterPro" id="IPR009000">
    <property type="entry name" value="Transl_B-barrel_sf"/>
</dbReference>
<dbReference type="NCBIfam" id="TIGR03625">
    <property type="entry name" value="L3_bact"/>
    <property type="match status" value="1"/>
</dbReference>
<dbReference type="PANTHER" id="PTHR11229">
    <property type="entry name" value="50S RIBOSOMAL PROTEIN L3"/>
    <property type="match status" value="1"/>
</dbReference>
<dbReference type="PANTHER" id="PTHR11229:SF16">
    <property type="entry name" value="LARGE RIBOSOMAL SUBUNIT PROTEIN UL3C"/>
    <property type="match status" value="1"/>
</dbReference>
<dbReference type="Pfam" id="PF00297">
    <property type="entry name" value="Ribosomal_L3"/>
    <property type="match status" value="1"/>
</dbReference>
<dbReference type="SUPFAM" id="SSF50447">
    <property type="entry name" value="Translation proteins"/>
    <property type="match status" value="1"/>
</dbReference>
<dbReference type="PROSITE" id="PS00474">
    <property type="entry name" value="RIBOSOMAL_L3"/>
    <property type="match status" value="1"/>
</dbReference>
<protein>
    <recommendedName>
        <fullName evidence="1">Large ribosomal subunit protein uL3</fullName>
    </recommendedName>
    <alternativeName>
        <fullName evidence="3">50S ribosomal protein L3</fullName>
    </alternativeName>
</protein>
<gene>
    <name evidence="1" type="primary">rplC</name>
    <name type="ordered locus">Haur_4915</name>
</gene>
<keyword id="KW-0687">Ribonucleoprotein</keyword>
<keyword id="KW-0689">Ribosomal protein</keyword>
<keyword id="KW-0694">RNA-binding</keyword>
<keyword id="KW-0699">rRNA-binding</keyword>
<reference key="1">
    <citation type="journal article" date="2011" name="Stand. Genomic Sci.">
        <title>Complete genome sequence of the filamentous gliding predatory bacterium Herpetosiphon aurantiacus type strain (114-95(T)).</title>
        <authorList>
            <person name="Kiss H."/>
            <person name="Nett M."/>
            <person name="Domin N."/>
            <person name="Martin K."/>
            <person name="Maresca J.A."/>
            <person name="Copeland A."/>
            <person name="Lapidus A."/>
            <person name="Lucas S."/>
            <person name="Berry K.W."/>
            <person name="Glavina Del Rio T."/>
            <person name="Dalin E."/>
            <person name="Tice H."/>
            <person name="Pitluck S."/>
            <person name="Richardson P."/>
            <person name="Bruce D."/>
            <person name="Goodwin L."/>
            <person name="Han C."/>
            <person name="Detter J.C."/>
            <person name="Schmutz J."/>
            <person name="Brettin T."/>
            <person name="Land M."/>
            <person name="Hauser L."/>
            <person name="Kyrpides N.C."/>
            <person name="Ivanova N."/>
            <person name="Goeker M."/>
            <person name="Woyke T."/>
            <person name="Klenk H.P."/>
            <person name="Bryant D.A."/>
        </authorList>
    </citation>
    <scope>NUCLEOTIDE SEQUENCE [LARGE SCALE GENOMIC DNA]</scope>
    <source>
        <strain>ATCC 23779 / DSM 785 / 114-95</strain>
    </source>
</reference>
<organism>
    <name type="scientific">Herpetosiphon aurantiacus (strain ATCC 23779 / DSM 785 / 114-95)</name>
    <dbReference type="NCBI Taxonomy" id="316274"/>
    <lineage>
        <taxon>Bacteria</taxon>
        <taxon>Bacillati</taxon>
        <taxon>Chloroflexota</taxon>
        <taxon>Chloroflexia</taxon>
        <taxon>Herpetosiphonales</taxon>
        <taxon>Herpetosiphonaceae</taxon>
        <taxon>Herpetosiphon</taxon>
    </lineage>
</organism>